<comment type="function">
    <text evidence="1">Binds mRNA; thus facilitating recognition of the initiation point. It is needed to translate mRNA with a short Shine-Dalgarno (SD) purine-rich sequence (By similarity).</text>
</comment>
<comment type="similarity">
    <text evidence="4">Belongs to the bacterial ribosomal protein bS1 family.</text>
</comment>
<dbReference type="EMBL" id="CP000029">
    <property type="protein sequence ID" value="AAW54449.1"/>
    <property type="molecule type" value="Genomic_DNA"/>
</dbReference>
<dbReference type="RefSeq" id="WP_001831057.1">
    <property type="nucleotide sequence ID" value="NC_002976.3"/>
</dbReference>
<dbReference type="SMR" id="Q5HP69"/>
<dbReference type="STRING" id="176279.SERP1044"/>
<dbReference type="GeneID" id="50018715"/>
<dbReference type="KEGG" id="ser:SERP1044"/>
<dbReference type="eggNOG" id="COG0539">
    <property type="taxonomic scope" value="Bacteria"/>
</dbReference>
<dbReference type="HOGENOM" id="CLU_015805_4_5_9"/>
<dbReference type="Proteomes" id="UP000000531">
    <property type="component" value="Chromosome"/>
</dbReference>
<dbReference type="GO" id="GO:0022627">
    <property type="term" value="C:cytosolic small ribosomal subunit"/>
    <property type="evidence" value="ECO:0007669"/>
    <property type="project" value="TreeGrafter"/>
</dbReference>
<dbReference type="GO" id="GO:0003729">
    <property type="term" value="F:mRNA binding"/>
    <property type="evidence" value="ECO:0007669"/>
    <property type="project" value="TreeGrafter"/>
</dbReference>
<dbReference type="GO" id="GO:0003735">
    <property type="term" value="F:structural constituent of ribosome"/>
    <property type="evidence" value="ECO:0007669"/>
    <property type="project" value="TreeGrafter"/>
</dbReference>
<dbReference type="GO" id="GO:0006412">
    <property type="term" value="P:translation"/>
    <property type="evidence" value="ECO:0007669"/>
    <property type="project" value="TreeGrafter"/>
</dbReference>
<dbReference type="CDD" id="cd05687">
    <property type="entry name" value="S1_RPS1_repeat_ec1_hs1"/>
    <property type="match status" value="1"/>
</dbReference>
<dbReference type="CDD" id="cd04465">
    <property type="entry name" value="S1_RPS1_repeat_ec2_hs2"/>
    <property type="match status" value="1"/>
</dbReference>
<dbReference type="FunFam" id="2.40.50.140:FF:000114">
    <property type="entry name" value="30S ribosomal protein S1"/>
    <property type="match status" value="1"/>
</dbReference>
<dbReference type="FunFam" id="2.40.50.140:FF:000166">
    <property type="entry name" value="30S ribosomal protein S1"/>
    <property type="match status" value="1"/>
</dbReference>
<dbReference type="FunFam" id="2.40.50.140:FF:000182">
    <property type="entry name" value="30S ribosomal protein S1"/>
    <property type="match status" value="1"/>
</dbReference>
<dbReference type="FunFam" id="2.40.50.140:FF:000051">
    <property type="entry name" value="RNA-binding transcriptional accessory protein"/>
    <property type="match status" value="1"/>
</dbReference>
<dbReference type="Gene3D" id="2.40.50.140">
    <property type="entry name" value="Nucleic acid-binding proteins"/>
    <property type="match status" value="4"/>
</dbReference>
<dbReference type="InterPro" id="IPR012340">
    <property type="entry name" value="NA-bd_OB-fold"/>
</dbReference>
<dbReference type="InterPro" id="IPR050437">
    <property type="entry name" value="Ribos_protein_bS1-like"/>
</dbReference>
<dbReference type="InterPro" id="IPR035104">
    <property type="entry name" value="Ribosomal_protein_S1-like"/>
</dbReference>
<dbReference type="InterPro" id="IPR003029">
    <property type="entry name" value="S1_domain"/>
</dbReference>
<dbReference type="NCBIfam" id="NF005208">
    <property type="entry name" value="PRK06676.1"/>
    <property type="match status" value="1"/>
</dbReference>
<dbReference type="PANTHER" id="PTHR10724">
    <property type="entry name" value="30S RIBOSOMAL PROTEIN S1"/>
    <property type="match status" value="1"/>
</dbReference>
<dbReference type="PANTHER" id="PTHR10724:SF7">
    <property type="entry name" value="SMALL RIBOSOMAL SUBUNIT PROTEIN BS1C"/>
    <property type="match status" value="1"/>
</dbReference>
<dbReference type="Pfam" id="PF00575">
    <property type="entry name" value="S1"/>
    <property type="match status" value="4"/>
</dbReference>
<dbReference type="PRINTS" id="PR00681">
    <property type="entry name" value="RIBOSOMALS1"/>
</dbReference>
<dbReference type="SMART" id="SM00316">
    <property type="entry name" value="S1"/>
    <property type="match status" value="4"/>
</dbReference>
<dbReference type="SUPFAM" id="SSF50249">
    <property type="entry name" value="Nucleic acid-binding proteins"/>
    <property type="match status" value="4"/>
</dbReference>
<dbReference type="PROSITE" id="PS50126">
    <property type="entry name" value="S1"/>
    <property type="match status" value="4"/>
</dbReference>
<gene>
    <name type="primary">rpsA</name>
    <name type="ordered locus">SERP1044</name>
</gene>
<feature type="chain" id="PRO_0000196053" description="Small ribosomal subunit protein bS1">
    <location>
        <begin position="1"/>
        <end position="392"/>
    </location>
</feature>
<feature type="domain" description="S1 motif 1" evidence="2">
    <location>
        <begin position="16"/>
        <end position="90"/>
    </location>
</feature>
<feature type="domain" description="S1 motif 2" evidence="2">
    <location>
        <begin position="108"/>
        <end position="173"/>
    </location>
</feature>
<feature type="domain" description="S1 motif 3" evidence="2">
    <location>
        <begin position="194"/>
        <end position="262"/>
    </location>
</feature>
<feature type="domain" description="S1 motif 4" evidence="2">
    <location>
        <begin position="279"/>
        <end position="348"/>
    </location>
</feature>
<feature type="region of interest" description="Disordered" evidence="3">
    <location>
        <begin position="361"/>
        <end position="380"/>
    </location>
</feature>
<name>RS1_STAEQ</name>
<accession>Q5HP69</accession>
<evidence type="ECO:0000250" key="1"/>
<evidence type="ECO:0000255" key="2">
    <source>
        <dbReference type="PROSITE-ProRule" id="PRU00180"/>
    </source>
</evidence>
<evidence type="ECO:0000256" key="3">
    <source>
        <dbReference type="SAM" id="MobiDB-lite"/>
    </source>
</evidence>
<evidence type="ECO:0000305" key="4"/>
<reference key="1">
    <citation type="journal article" date="2005" name="J. Bacteriol.">
        <title>Insights on evolution of virulence and resistance from the complete genome analysis of an early methicillin-resistant Staphylococcus aureus strain and a biofilm-producing methicillin-resistant Staphylococcus epidermidis strain.</title>
        <authorList>
            <person name="Gill S.R."/>
            <person name="Fouts D.E."/>
            <person name="Archer G.L."/>
            <person name="Mongodin E.F."/>
            <person name="DeBoy R.T."/>
            <person name="Ravel J."/>
            <person name="Paulsen I.T."/>
            <person name="Kolonay J.F."/>
            <person name="Brinkac L.M."/>
            <person name="Beanan M.J."/>
            <person name="Dodson R.J."/>
            <person name="Daugherty S.C."/>
            <person name="Madupu R."/>
            <person name="Angiuoli S.V."/>
            <person name="Durkin A.S."/>
            <person name="Haft D.H."/>
            <person name="Vamathevan J.J."/>
            <person name="Khouri H."/>
            <person name="Utterback T.R."/>
            <person name="Lee C."/>
            <person name="Dimitrov G."/>
            <person name="Jiang L."/>
            <person name="Qin H."/>
            <person name="Weidman J."/>
            <person name="Tran K."/>
            <person name="Kang K.H."/>
            <person name="Hance I.R."/>
            <person name="Nelson K.E."/>
            <person name="Fraser C.M."/>
        </authorList>
    </citation>
    <scope>NUCLEOTIDE SEQUENCE [LARGE SCALE GENOMIC DNA]</scope>
    <source>
        <strain>ATCC 35984 / DSM 28319 / BCRC 17069 / CCUG 31568 / BM 3577 / RP62A</strain>
    </source>
</reference>
<sequence>MTEEFNESMINDIKEGDKVTGEVQQVEDKQVVVHINGGKFNGIIPISQLSTHHIENPSEVVKVGDEVEAYVTKIEFDEENDTGAYILSKRQLETEKSYEYLQEKLDNDEVIEAEVTEVVKGGLVVDVGQRGFVPASLISTDFIEDFSVFDGQTIRIKVEELDPENNRVILSRKAVEQLENDAKKASILDSLNEGDVIDGKVARLTNFGAFIDIGGVDGLVHVSELSHEHVQTPEEVVSVGEAVKVKVKSVEKDSERISLSIKDTLPTPFENIKGKFHEDDVIEGTVVRLANFGAFVEIAPSVQGLVHISEIDHKHIGSPNEVLEPGQQVNVKILGIDEDNERISLSIKATLPKENVIESDASTTQSYLEDDNDEDKPTLGDVFGDKFKDLKF</sequence>
<proteinExistence type="inferred from homology"/>
<protein>
    <recommendedName>
        <fullName evidence="4">Small ribosomal subunit protein bS1</fullName>
    </recommendedName>
    <alternativeName>
        <fullName>30S ribosomal protein S1</fullName>
    </alternativeName>
</protein>
<keyword id="KW-1185">Reference proteome</keyword>
<keyword id="KW-0677">Repeat</keyword>
<keyword id="KW-0687">Ribonucleoprotein</keyword>
<keyword id="KW-0689">Ribosomal protein</keyword>
<keyword id="KW-0694">RNA-binding</keyword>
<organism>
    <name type="scientific">Staphylococcus epidermidis (strain ATCC 35984 / DSM 28319 / BCRC 17069 / CCUG 31568 / BM 3577 / RP62A)</name>
    <dbReference type="NCBI Taxonomy" id="176279"/>
    <lineage>
        <taxon>Bacteria</taxon>
        <taxon>Bacillati</taxon>
        <taxon>Bacillota</taxon>
        <taxon>Bacilli</taxon>
        <taxon>Bacillales</taxon>
        <taxon>Staphylococcaceae</taxon>
        <taxon>Staphylococcus</taxon>
    </lineage>
</organism>